<organism>
    <name type="scientific">Rhodococcus erythropolis</name>
    <name type="common">Arthrobacter picolinophilus</name>
    <dbReference type="NCBI Taxonomy" id="1833"/>
    <lineage>
        <taxon>Bacteria</taxon>
        <taxon>Bacillati</taxon>
        <taxon>Actinomycetota</taxon>
        <taxon>Actinomycetes</taxon>
        <taxon>Mycobacteriales</taxon>
        <taxon>Nocardiaceae</taxon>
        <taxon>Rhodococcus</taxon>
        <taxon>Rhodococcus erythropolis group</taxon>
    </lineage>
</organism>
<sequence length="447" mass="50346">MGIETEFGVTCTFHGHRRLSPDEVARYLFRRVVSWGRSSNVFLRNGARLYLDVGSHPEYATAECDSLIQLVNHDRAGERVLEELLIDAEARLAEEGIGGDIYLFKNNTDSAGNSYGCHENFLVARAGEFSRISDVLLPFLVTRQLICGAGKVLQTPKAATFCLSQRAEHIWEGVSSATTRSRPIINTRDEPHADAEKYRRLHVIVGDSNMAETTTMLKVGSAALVLEMIEAGVSFRDFALDNPIRAIREVSHDVTGKKPVRLAGGRQASALDIQREYHAKAVEHLRNREPDPQVEQVVDLWGRTLDAVEAQDFAKVDTEIDWVIKRKLFQRYQDRHGFDLSDPKIAQLDLAYHDIKRGRGVFDVLQRKGLVKRVTEDETIDDAVENPPQTTRAKLRGDFITAAQAAGRDFTVDWVHLKLNDQAQRTVLCKDPFRSVDERVERLIASM</sequence>
<accession>P72270</accession>
<feature type="chain" id="PRO_0000395945" description="Pup--protein ligase 2">
    <location>
        <begin position="1"/>
        <end position="447"/>
    </location>
</feature>
<feature type="active site" description="Proton acceptor" evidence="1">
    <location>
        <position position="52"/>
    </location>
</feature>
<feature type="binding site" evidence="1">
    <location>
        <position position="4"/>
    </location>
    <ligand>
        <name>Mg(2+)</name>
        <dbReference type="ChEBI" id="CHEBI:18420"/>
    </ligand>
</feature>
<feature type="binding site" evidence="1">
    <location>
        <position position="48"/>
    </location>
    <ligand>
        <name>ATP</name>
        <dbReference type="ChEBI" id="CHEBI:30616"/>
    </ligand>
</feature>
<feature type="binding site" evidence="1">
    <location>
        <position position="50"/>
    </location>
    <ligand>
        <name>Mg(2+)</name>
        <dbReference type="ChEBI" id="CHEBI:18420"/>
    </ligand>
</feature>
<feature type="binding site" evidence="1">
    <location>
        <position position="58"/>
    </location>
    <ligand>
        <name>Mg(2+)</name>
        <dbReference type="ChEBI" id="CHEBI:18420"/>
    </ligand>
</feature>
<feature type="binding site" evidence="1">
    <location>
        <position position="61"/>
    </location>
    <ligand>
        <name>ATP</name>
        <dbReference type="ChEBI" id="CHEBI:30616"/>
    </ligand>
</feature>
<feature type="binding site" evidence="1">
    <location>
        <position position="414"/>
    </location>
    <ligand>
        <name>ATP</name>
        <dbReference type="ChEBI" id="CHEBI:30616"/>
    </ligand>
</feature>
<reference key="1">
    <citation type="journal article" date="1997" name="DNA Seq.">
        <title>Further sequence analysis of the DNA regions with the Rhodococcus 20S proteasome structural genes reveals extensive homology with Mycobacterium leprae.</title>
        <authorList>
            <person name="Nagy I."/>
            <person name="Schoofs G."/>
            <person name="Vanderleyden J."/>
            <person name="De Mot R."/>
        </authorList>
    </citation>
    <scope>NUCLEOTIDE SEQUENCE [GENOMIC DNA]</scope>
    <source>
        <strain>NI86/21</strain>
    </source>
</reference>
<name>PAFA2_RHOER</name>
<keyword id="KW-0067">ATP-binding</keyword>
<keyword id="KW-0436">Ligase</keyword>
<keyword id="KW-0460">Magnesium</keyword>
<keyword id="KW-0479">Metal-binding</keyword>
<keyword id="KW-0547">Nucleotide-binding</keyword>
<keyword id="KW-0833">Ubl conjugation pathway</keyword>
<gene>
    <name evidence="1" type="primary">pafA2</name>
    <name type="ORF">ORF9(2)</name>
</gene>
<proteinExistence type="inferred from homology"/>
<evidence type="ECO:0000255" key="1">
    <source>
        <dbReference type="HAMAP-Rule" id="MF_02111"/>
    </source>
</evidence>
<comment type="function">
    <text evidence="1">Catalyzes the covalent attachment of the prokaryotic ubiquitin-like protein modifier Pup to the proteasomal substrate proteins, thereby targeting them for proteasomal degradation. This tagging system is termed pupylation. The ligation reaction involves the side-chain carboxylate of the C-terminal glutamate of Pup and the side-chain amino group of a substrate lysine.</text>
</comment>
<comment type="catalytic activity">
    <reaction evidence="1">
        <text>ATP + [prokaryotic ubiquitin-like protein]-L-glutamate + [protein]-L-lysine = ADP + phosphate + N(6)-([prokaryotic ubiquitin-like protein]-gamma-L-glutamyl)-[protein]-L-lysine.</text>
        <dbReference type="EC" id="6.3.1.19"/>
    </reaction>
</comment>
<comment type="pathway">
    <text evidence="1">Protein degradation; proteasomal Pup-dependent pathway.</text>
</comment>
<comment type="pathway">
    <text evidence="1">Protein modification; protein pupylation.</text>
</comment>
<comment type="miscellaneous">
    <text evidence="1">The reaction mechanism probably proceeds via the activation of Pup by phosphorylation of its C-terminal glutamate, which is then subject to nucleophilic attack by the substrate lysine, resulting in an isopeptide bond and the release of phosphate as a good leaving group.</text>
</comment>
<comment type="similarity">
    <text evidence="1">Belongs to the Pup ligase/Pup deamidase family. Pup-conjugating enzyme subfamily.</text>
</comment>
<dbReference type="EC" id="6.3.1.19" evidence="1"/>
<dbReference type="EMBL" id="Z82005">
    <property type="protein sequence ID" value="CAB04769.1"/>
    <property type="molecule type" value="Genomic_DNA"/>
</dbReference>
<dbReference type="RefSeq" id="WP_020969669.1">
    <property type="nucleotide sequence ID" value="NZ_JABBPH010000001.1"/>
</dbReference>
<dbReference type="SMR" id="P72270"/>
<dbReference type="STRING" id="1833.XU06_14785"/>
<dbReference type="OrthoDB" id="9760627at2"/>
<dbReference type="UniPathway" id="UPA00997"/>
<dbReference type="UniPathway" id="UPA00998"/>
<dbReference type="GO" id="GO:0005524">
    <property type="term" value="F:ATP binding"/>
    <property type="evidence" value="ECO:0007669"/>
    <property type="project" value="UniProtKB-UniRule"/>
</dbReference>
<dbReference type="GO" id="GO:0016879">
    <property type="term" value="F:ligase activity, forming carbon-nitrogen bonds"/>
    <property type="evidence" value="ECO:0007669"/>
    <property type="project" value="InterPro"/>
</dbReference>
<dbReference type="GO" id="GO:0000287">
    <property type="term" value="F:magnesium ion binding"/>
    <property type="evidence" value="ECO:0007669"/>
    <property type="project" value="UniProtKB-UniRule"/>
</dbReference>
<dbReference type="GO" id="GO:0019787">
    <property type="term" value="F:ubiquitin-like protein transferase activity"/>
    <property type="evidence" value="ECO:0007669"/>
    <property type="project" value="UniProtKB-UniRule"/>
</dbReference>
<dbReference type="GO" id="GO:0019941">
    <property type="term" value="P:modification-dependent protein catabolic process"/>
    <property type="evidence" value="ECO:0007669"/>
    <property type="project" value="UniProtKB-UniRule"/>
</dbReference>
<dbReference type="GO" id="GO:0010498">
    <property type="term" value="P:proteasomal protein catabolic process"/>
    <property type="evidence" value="ECO:0007669"/>
    <property type="project" value="UniProtKB-UniRule"/>
</dbReference>
<dbReference type="GO" id="GO:0070490">
    <property type="term" value="P:protein pupylation"/>
    <property type="evidence" value="ECO:0007669"/>
    <property type="project" value="UniProtKB-UniRule"/>
</dbReference>
<dbReference type="HAMAP" id="MF_02111">
    <property type="entry name" value="Pup_ligase"/>
    <property type="match status" value="1"/>
</dbReference>
<dbReference type="InterPro" id="IPR022279">
    <property type="entry name" value="Pup_ligase"/>
</dbReference>
<dbReference type="InterPro" id="IPR004347">
    <property type="entry name" value="Pup_ligase/deamidase"/>
</dbReference>
<dbReference type="NCBIfam" id="TIGR03686">
    <property type="entry name" value="pupylate_PafA"/>
    <property type="match status" value="1"/>
</dbReference>
<dbReference type="PANTHER" id="PTHR42307">
    <property type="entry name" value="PUP DEAMIDASE/DEPUPYLASE"/>
    <property type="match status" value="1"/>
</dbReference>
<dbReference type="PANTHER" id="PTHR42307:SF3">
    <property type="entry name" value="PUP--PROTEIN LIGASE"/>
    <property type="match status" value="1"/>
</dbReference>
<dbReference type="Pfam" id="PF03136">
    <property type="entry name" value="Pup_ligase"/>
    <property type="match status" value="1"/>
</dbReference>
<dbReference type="PIRSF" id="PIRSF018077">
    <property type="entry name" value="UCP018077"/>
    <property type="match status" value="1"/>
</dbReference>
<protein>
    <recommendedName>
        <fullName evidence="1">Pup--protein ligase 2</fullName>
        <ecNumber evidence="1">6.3.1.19</ecNumber>
    </recommendedName>
    <alternativeName>
        <fullName evidence="1">Proteasome accessory factor A 2</fullName>
    </alternativeName>
    <alternativeName>
        <fullName evidence="1">Pup-conjugating enzyme 2</fullName>
    </alternativeName>
</protein>